<organism>
    <name type="scientific">Oleidesulfovibrio alaskensis (strain ATCC BAA-1058 / DSM 17464 / G20)</name>
    <name type="common">Desulfovibrio alaskensis</name>
    <dbReference type="NCBI Taxonomy" id="207559"/>
    <lineage>
        <taxon>Bacteria</taxon>
        <taxon>Pseudomonadati</taxon>
        <taxon>Thermodesulfobacteriota</taxon>
        <taxon>Desulfovibrionia</taxon>
        <taxon>Desulfovibrionales</taxon>
        <taxon>Desulfovibrionaceae</taxon>
        <taxon>Oleidesulfovibrio</taxon>
    </lineage>
</organism>
<gene>
    <name evidence="1" type="primary">atpB</name>
    <name type="ordered locus">Dde_2700</name>
</gene>
<name>ATP6_OLEA2</name>
<proteinExistence type="inferred from homology"/>
<keyword id="KW-0066">ATP synthesis</keyword>
<keyword id="KW-0997">Cell inner membrane</keyword>
<keyword id="KW-1003">Cell membrane</keyword>
<keyword id="KW-0138">CF(0)</keyword>
<keyword id="KW-0375">Hydrogen ion transport</keyword>
<keyword id="KW-0406">Ion transport</keyword>
<keyword id="KW-0472">Membrane</keyword>
<keyword id="KW-1185">Reference proteome</keyword>
<keyword id="KW-0812">Transmembrane</keyword>
<keyword id="KW-1133">Transmembrane helix</keyword>
<keyword id="KW-0813">Transport</keyword>
<evidence type="ECO:0000255" key="1">
    <source>
        <dbReference type="HAMAP-Rule" id="MF_01393"/>
    </source>
</evidence>
<reference key="1">
    <citation type="journal article" date="2011" name="J. Bacteriol.">
        <title>Complete genome sequence and updated annotation of Desulfovibrio alaskensis G20.</title>
        <authorList>
            <person name="Hauser L.J."/>
            <person name="Land M.L."/>
            <person name="Brown S.D."/>
            <person name="Larimer F."/>
            <person name="Keller K.L."/>
            <person name="Rapp-Giles B.J."/>
            <person name="Price M.N."/>
            <person name="Lin M."/>
            <person name="Bruce D.C."/>
            <person name="Detter J.C."/>
            <person name="Tapia R."/>
            <person name="Han C.S."/>
            <person name="Goodwin L.A."/>
            <person name="Cheng J.F."/>
            <person name="Pitluck S."/>
            <person name="Copeland A."/>
            <person name="Lucas S."/>
            <person name="Nolan M."/>
            <person name="Lapidus A.L."/>
            <person name="Palumbo A.V."/>
            <person name="Wall J.D."/>
        </authorList>
    </citation>
    <scope>NUCLEOTIDE SEQUENCE [LARGE SCALE GENOMIC DNA]</scope>
    <source>
        <strain>ATCC BAA-1058 / DSM 17464 / G20</strain>
    </source>
</reference>
<feature type="chain" id="PRO_0000362285" description="ATP synthase subunit a">
    <location>
        <begin position="1"/>
        <end position="233"/>
    </location>
</feature>
<feature type="transmembrane region" description="Helical" evidence="1">
    <location>
        <begin position="29"/>
        <end position="49"/>
    </location>
</feature>
<feature type="transmembrane region" description="Helical" evidence="1">
    <location>
        <begin position="60"/>
        <end position="80"/>
    </location>
</feature>
<feature type="transmembrane region" description="Helical" evidence="1">
    <location>
        <begin position="89"/>
        <end position="109"/>
    </location>
</feature>
<feature type="transmembrane region" description="Helical" evidence="1">
    <location>
        <begin position="115"/>
        <end position="135"/>
    </location>
</feature>
<feature type="transmembrane region" description="Helical" evidence="1">
    <location>
        <begin position="143"/>
        <end position="163"/>
    </location>
</feature>
<feature type="transmembrane region" description="Helical" evidence="1">
    <location>
        <begin position="185"/>
        <end position="205"/>
    </location>
</feature>
<feature type="transmembrane region" description="Helical" evidence="1">
    <location>
        <begin position="206"/>
        <end position="226"/>
    </location>
</feature>
<comment type="function">
    <text evidence="1">Key component of the proton channel; it plays a direct role in the translocation of protons across the membrane.</text>
</comment>
<comment type="subunit">
    <text evidence="1">F-type ATPases have 2 components, CF(1) - the catalytic core - and CF(0) - the membrane proton channel. CF(1) has five subunits: alpha(3), beta(3), gamma(1), delta(1), epsilon(1). CF(0) has three main subunits: a(1), b(2) and c(9-12). The alpha and beta chains form an alternating ring which encloses part of the gamma chain. CF(1) is attached to CF(0) by a central stalk formed by the gamma and epsilon chains, while a peripheral stalk is formed by the delta and b chains.</text>
</comment>
<comment type="subcellular location">
    <subcellularLocation>
        <location evidence="1">Cell inner membrane</location>
        <topology evidence="1">Multi-pass membrane protein</topology>
    </subcellularLocation>
</comment>
<comment type="similarity">
    <text evidence="1">Belongs to the ATPase A chain family.</text>
</comment>
<accession>Q30XV0</accession>
<dbReference type="EMBL" id="CP000112">
    <property type="protein sequence ID" value="ABB39496.1"/>
    <property type="molecule type" value="Genomic_DNA"/>
</dbReference>
<dbReference type="RefSeq" id="WP_011368523.1">
    <property type="nucleotide sequence ID" value="NC_007519.1"/>
</dbReference>
<dbReference type="SMR" id="Q30XV0"/>
<dbReference type="STRING" id="207559.Dde_2700"/>
<dbReference type="KEGG" id="dde:Dde_2700"/>
<dbReference type="eggNOG" id="COG0356">
    <property type="taxonomic scope" value="Bacteria"/>
</dbReference>
<dbReference type="HOGENOM" id="CLU_041018_2_2_7"/>
<dbReference type="Proteomes" id="UP000002710">
    <property type="component" value="Chromosome"/>
</dbReference>
<dbReference type="GO" id="GO:0005886">
    <property type="term" value="C:plasma membrane"/>
    <property type="evidence" value="ECO:0007669"/>
    <property type="project" value="UniProtKB-SubCell"/>
</dbReference>
<dbReference type="GO" id="GO:0045259">
    <property type="term" value="C:proton-transporting ATP synthase complex"/>
    <property type="evidence" value="ECO:0007669"/>
    <property type="project" value="UniProtKB-KW"/>
</dbReference>
<dbReference type="GO" id="GO:0046933">
    <property type="term" value="F:proton-transporting ATP synthase activity, rotational mechanism"/>
    <property type="evidence" value="ECO:0007669"/>
    <property type="project" value="UniProtKB-UniRule"/>
</dbReference>
<dbReference type="GO" id="GO:0042777">
    <property type="term" value="P:proton motive force-driven plasma membrane ATP synthesis"/>
    <property type="evidence" value="ECO:0007669"/>
    <property type="project" value="TreeGrafter"/>
</dbReference>
<dbReference type="CDD" id="cd00310">
    <property type="entry name" value="ATP-synt_Fo_a_6"/>
    <property type="match status" value="1"/>
</dbReference>
<dbReference type="Gene3D" id="1.20.120.220">
    <property type="entry name" value="ATP synthase, F0 complex, subunit A"/>
    <property type="match status" value="1"/>
</dbReference>
<dbReference type="HAMAP" id="MF_01393">
    <property type="entry name" value="ATP_synth_a_bact"/>
    <property type="match status" value="1"/>
</dbReference>
<dbReference type="InterPro" id="IPR045082">
    <property type="entry name" value="ATP_syn_F0_a_bact/chloroplast"/>
</dbReference>
<dbReference type="InterPro" id="IPR000568">
    <property type="entry name" value="ATP_synth_F0_asu"/>
</dbReference>
<dbReference type="InterPro" id="IPR023011">
    <property type="entry name" value="ATP_synth_F0_asu_AS"/>
</dbReference>
<dbReference type="InterPro" id="IPR035908">
    <property type="entry name" value="F0_ATP_A_sf"/>
</dbReference>
<dbReference type="NCBIfam" id="TIGR01131">
    <property type="entry name" value="ATP_synt_6_or_A"/>
    <property type="match status" value="1"/>
</dbReference>
<dbReference type="PANTHER" id="PTHR42823">
    <property type="entry name" value="ATP SYNTHASE SUBUNIT A, CHLOROPLASTIC"/>
    <property type="match status" value="1"/>
</dbReference>
<dbReference type="PANTHER" id="PTHR42823:SF3">
    <property type="entry name" value="ATP SYNTHASE SUBUNIT A, CHLOROPLASTIC"/>
    <property type="match status" value="1"/>
</dbReference>
<dbReference type="Pfam" id="PF00119">
    <property type="entry name" value="ATP-synt_A"/>
    <property type="match status" value="1"/>
</dbReference>
<dbReference type="PRINTS" id="PR00123">
    <property type="entry name" value="ATPASEA"/>
</dbReference>
<dbReference type="SUPFAM" id="SSF81336">
    <property type="entry name" value="F1F0 ATP synthase subunit A"/>
    <property type="match status" value="1"/>
</dbReference>
<dbReference type="PROSITE" id="PS00449">
    <property type="entry name" value="ATPASE_A"/>
    <property type="match status" value="1"/>
</dbReference>
<protein>
    <recommendedName>
        <fullName evidence="1">ATP synthase subunit a</fullName>
    </recommendedName>
    <alternativeName>
        <fullName evidence="1">ATP synthase F0 sector subunit a</fullName>
    </alternativeName>
    <alternativeName>
        <fullName evidence="1">F-ATPase subunit 6</fullName>
    </alternativeName>
</protein>
<sequence>MASGLPHPVLLSDLVGLGHINVGGQSVEFKHVFYTWCVMAMLFAVSFIVRGKIKMVPGKLQNIFEVIIGGLEEFVVSITGEDGRKVYPVLIVFFLFILCMNLTGLVPGFDAPTANINTTASLALFCFIYYNYIGIQRWGAGYIKHFMGPMWWLSPLMLPLELISHTARPLSLSLRLFGNIRGEEFVLILFFMLAPIIGTIPIYFLFTLAKVLQAFIFFMLATIYLKGSLEHAH</sequence>